<protein>
    <recommendedName>
        <fullName>Glucose-6-phosphate isomerase, cytosolic 1</fullName>
        <shortName>GPI</shortName>
        <ecNumber>5.3.1.9</ecNumber>
    </recommendedName>
    <alternativeName>
        <fullName>Phosphoglucose isomerase</fullName>
        <shortName>PGI</shortName>
    </alternativeName>
    <alternativeName>
        <fullName>Phosphohexose isomerase</fullName>
        <shortName>PHI</shortName>
    </alternativeName>
</protein>
<accession>P54239</accession>
<name>G6PI1_CLAWI</name>
<gene>
    <name type="primary">PGIC1</name>
</gene>
<reference key="1">
    <citation type="journal article" date="1996" name="Syst. Bot.">
        <title>Phylogenetic relationships among the sections of Clarkia (Onagraceae) inferred from the nucleotide sequences of PgiC.</title>
        <authorList>
            <person name="Gottlieb L.D."/>
            <person name="Ford V.S."/>
        </authorList>
        <dbReference type="AGRICOLA" id="IND20535960"/>
    </citation>
    <scope>NUCLEOTIDE SEQUENCE [GENOMIC DNA]</scope>
    <source>
        <strain>Population LDG 8728</strain>
    </source>
</reference>
<dbReference type="EC" id="5.3.1.9"/>
<dbReference type="EMBL" id="X89394">
    <property type="protein sequence ID" value="CAA61574.1"/>
    <property type="molecule type" value="Genomic_DNA"/>
</dbReference>
<dbReference type="SMR" id="P54239"/>
<dbReference type="UniPathway" id="UPA00109">
    <property type="reaction ID" value="UER00181"/>
</dbReference>
<dbReference type="GO" id="GO:0005829">
    <property type="term" value="C:cytosol"/>
    <property type="evidence" value="ECO:0007669"/>
    <property type="project" value="TreeGrafter"/>
</dbReference>
<dbReference type="GO" id="GO:0097367">
    <property type="term" value="F:carbohydrate derivative binding"/>
    <property type="evidence" value="ECO:0007669"/>
    <property type="project" value="InterPro"/>
</dbReference>
<dbReference type="GO" id="GO:0004347">
    <property type="term" value="F:glucose-6-phosphate isomerase activity"/>
    <property type="evidence" value="ECO:0007669"/>
    <property type="project" value="UniProtKB-EC"/>
</dbReference>
<dbReference type="GO" id="GO:0048029">
    <property type="term" value="F:monosaccharide binding"/>
    <property type="evidence" value="ECO:0007669"/>
    <property type="project" value="TreeGrafter"/>
</dbReference>
<dbReference type="GO" id="GO:0006094">
    <property type="term" value="P:gluconeogenesis"/>
    <property type="evidence" value="ECO:0007669"/>
    <property type="project" value="UniProtKB-KW"/>
</dbReference>
<dbReference type="GO" id="GO:0051156">
    <property type="term" value="P:glucose 6-phosphate metabolic process"/>
    <property type="evidence" value="ECO:0007669"/>
    <property type="project" value="TreeGrafter"/>
</dbReference>
<dbReference type="GO" id="GO:0006096">
    <property type="term" value="P:glycolytic process"/>
    <property type="evidence" value="ECO:0007669"/>
    <property type="project" value="UniProtKB-UniPathway"/>
</dbReference>
<dbReference type="CDD" id="cd05015">
    <property type="entry name" value="SIS_PGI_1"/>
    <property type="match status" value="1"/>
</dbReference>
<dbReference type="CDD" id="cd05016">
    <property type="entry name" value="SIS_PGI_2"/>
    <property type="match status" value="1"/>
</dbReference>
<dbReference type="FunFam" id="1.10.1390.10:FF:000002">
    <property type="entry name" value="Glucose-6-phosphate isomerase"/>
    <property type="match status" value="1"/>
</dbReference>
<dbReference type="FunFam" id="3.40.50.10490:FF:000018">
    <property type="entry name" value="Glucose-6-phosphate isomerase"/>
    <property type="match status" value="1"/>
</dbReference>
<dbReference type="FunFam" id="3.40.50.10490:FF:000031">
    <property type="entry name" value="Glucose-6-phosphate isomerase"/>
    <property type="match status" value="1"/>
</dbReference>
<dbReference type="FunFam" id="3.40.50.10490:FF:000048">
    <property type="entry name" value="Glucose-6-phosphate isomerase"/>
    <property type="match status" value="1"/>
</dbReference>
<dbReference type="Gene3D" id="1.10.1390.10">
    <property type="match status" value="1"/>
</dbReference>
<dbReference type="Gene3D" id="3.40.50.10490">
    <property type="entry name" value="Glucose-6-phosphate isomerase like protein, domain 1"/>
    <property type="match status" value="2"/>
</dbReference>
<dbReference type="HAMAP" id="MF_00473">
    <property type="entry name" value="G6P_isomerase"/>
    <property type="match status" value="1"/>
</dbReference>
<dbReference type="InterPro" id="IPR001672">
    <property type="entry name" value="G6P_Isomerase"/>
</dbReference>
<dbReference type="InterPro" id="IPR023096">
    <property type="entry name" value="G6P_Isomerase_C"/>
</dbReference>
<dbReference type="InterPro" id="IPR018189">
    <property type="entry name" value="Phosphoglucose_isomerase_CS"/>
</dbReference>
<dbReference type="InterPro" id="IPR046348">
    <property type="entry name" value="SIS_dom_sf"/>
</dbReference>
<dbReference type="InterPro" id="IPR035476">
    <property type="entry name" value="SIS_PGI_1"/>
</dbReference>
<dbReference type="InterPro" id="IPR035482">
    <property type="entry name" value="SIS_PGI_2"/>
</dbReference>
<dbReference type="NCBIfam" id="NF001211">
    <property type="entry name" value="PRK00179.1"/>
    <property type="match status" value="1"/>
</dbReference>
<dbReference type="PANTHER" id="PTHR11469">
    <property type="entry name" value="GLUCOSE-6-PHOSPHATE ISOMERASE"/>
    <property type="match status" value="1"/>
</dbReference>
<dbReference type="PANTHER" id="PTHR11469:SF1">
    <property type="entry name" value="GLUCOSE-6-PHOSPHATE ISOMERASE"/>
    <property type="match status" value="1"/>
</dbReference>
<dbReference type="Pfam" id="PF00342">
    <property type="entry name" value="PGI"/>
    <property type="match status" value="1"/>
</dbReference>
<dbReference type="PRINTS" id="PR00662">
    <property type="entry name" value="G6PISOMERASE"/>
</dbReference>
<dbReference type="SUPFAM" id="SSF53697">
    <property type="entry name" value="SIS domain"/>
    <property type="match status" value="1"/>
</dbReference>
<dbReference type="PROSITE" id="PS00765">
    <property type="entry name" value="P_GLUCOSE_ISOMERASE_1"/>
    <property type="match status" value="1"/>
</dbReference>
<dbReference type="PROSITE" id="PS00174">
    <property type="entry name" value="P_GLUCOSE_ISOMERASE_2"/>
    <property type="match status" value="1"/>
</dbReference>
<dbReference type="PROSITE" id="PS51463">
    <property type="entry name" value="P_GLUCOSE_ISOMERASE_3"/>
    <property type="match status" value="1"/>
</dbReference>
<feature type="chain" id="PRO_0000180558" description="Glucose-6-phosphate isomerase, cytosolic 1">
    <location>
        <begin position="1"/>
        <end position="568"/>
    </location>
</feature>
<feature type="active site" description="Proton donor" evidence="1">
    <location>
        <position position="360"/>
    </location>
</feature>
<feature type="active site" evidence="1">
    <location>
        <position position="391"/>
    </location>
</feature>
<feature type="active site" evidence="1">
    <location>
        <position position="516"/>
    </location>
</feature>
<comment type="catalytic activity">
    <reaction>
        <text>alpha-D-glucose 6-phosphate = beta-D-fructose 6-phosphate</text>
        <dbReference type="Rhea" id="RHEA:11816"/>
        <dbReference type="ChEBI" id="CHEBI:57634"/>
        <dbReference type="ChEBI" id="CHEBI:58225"/>
        <dbReference type="EC" id="5.3.1.9"/>
    </reaction>
</comment>
<comment type="pathway">
    <text>Carbohydrate degradation; glycolysis; D-glyceraldehyde 3-phosphate and glycerone phosphate from D-glucose: step 2/4.</text>
</comment>
<comment type="subunit">
    <text evidence="1">Homodimer.</text>
</comment>
<comment type="subcellular location">
    <subcellularLocation>
        <location evidence="1">Cytoplasm</location>
    </subcellularLocation>
</comment>
<comment type="similarity">
    <text evidence="2">Belongs to the GPI family.</text>
</comment>
<evidence type="ECO:0000250" key="1"/>
<evidence type="ECO:0000305" key="2"/>
<keyword id="KW-0963">Cytoplasm</keyword>
<keyword id="KW-0312">Gluconeogenesis</keyword>
<keyword id="KW-0324">Glycolysis</keyword>
<keyword id="KW-0413">Isomerase</keyword>
<sequence>MASPALISETEAWKDLKAHLEGIKMTHLRELMGDTERCQSMMLEFDNIFLDYSRQQASPDTISKLYRLADAAHLKQKIDHMYNGDHINSTENRSVLHVALRAPRNLAICSDGKNVVPDVWNVLDKIKDFSDRVRNGSWIGATGKELKDVIAVGIGGSFLGPLFVHTALQTDPEASKNARGRELRFLANVDPIDVARNISGLSPETTLVVVVSKTFTTAETMLNARTLREWISSALGPSAVAKHMVAVSTNIPLVEKFGIDPNNAFAFWDWVGGRYSVCSAVGVLPLSLQYGFAVVEKFLQGAHSIDQHFSSAPFEKNIPVLLGLLSVWNVSFLGYPARAILPYSQALEKLAPHIQQVSMESNGKGVSIDGLPLPFESGEIDFGEPGTNGQHSFYQLIHQGRVIPCDFIGVVKSQQPVYLKGEVVNNHDELMSNFFAQPDALAYGKTPEQLKKENVSEHLIPHKTFTGNRPSISLLLPTLDAYRIGQLLAIYEHRVAVQGFVWGINSFDQWGVELGKSLATQVRKQLHGSRVKGEPVEGFNFSTKTLLTRYLEATSDVPADPSTLLPNI</sequence>
<proteinExistence type="inferred from homology"/>
<organism>
    <name type="scientific">Clarkia williamsonii</name>
    <dbReference type="NCBI Taxonomy" id="49757"/>
    <lineage>
        <taxon>Eukaryota</taxon>
        <taxon>Viridiplantae</taxon>
        <taxon>Streptophyta</taxon>
        <taxon>Embryophyta</taxon>
        <taxon>Tracheophyta</taxon>
        <taxon>Spermatophyta</taxon>
        <taxon>Magnoliopsida</taxon>
        <taxon>eudicotyledons</taxon>
        <taxon>Gunneridae</taxon>
        <taxon>Pentapetalae</taxon>
        <taxon>rosids</taxon>
        <taxon>malvids</taxon>
        <taxon>Myrtales</taxon>
        <taxon>Onagraceae</taxon>
        <taxon>Onagroideae</taxon>
        <taxon>Onagreae</taxon>
        <taxon>Clarkia</taxon>
    </lineage>
</organism>